<keyword id="KW-0044">Antibiotic</keyword>
<keyword id="KW-0929">Antimicrobial</keyword>
<keyword id="KW-0165">Cleavage on pair of basic residues</keyword>
<keyword id="KW-1015">Disulfide bond</keyword>
<keyword id="KW-0295">Fungicide</keyword>
<keyword id="KW-0372">Hormone</keyword>
<keyword id="KW-1185">Reference proteome</keyword>
<keyword id="KW-0964">Secreted</keyword>
<keyword id="KW-0732">Signal</keyword>
<organism>
    <name type="scientific">Mus musculus</name>
    <name type="common">Mouse</name>
    <dbReference type="NCBI Taxonomy" id="10090"/>
    <lineage>
        <taxon>Eukaryota</taxon>
        <taxon>Metazoa</taxon>
        <taxon>Chordata</taxon>
        <taxon>Craniata</taxon>
        <taxon>Vertebrata</taxon>
        <taxon>Euteleostomi</taxon>
        <taxon>Mammalia</taxon>
        <taxon>Eutheria</taxon>
        <taxon>Euarchontoglires</taxon>
        <taxon>Glires</taxon>
        <taxon>Rodentia</taxon>
        <taxon>Myomorpha</taxon>
        <taxon>Muroidea</taxon>
        <taxon>Muridae</taxon>
        <taxon>Murinae</taxon>
        <taxon>Mus</taxon>
        <taxon>Mus</taxon>
    </lineage>
</organism>
<evidence type="ECO:0000250" key="1"/>
<evidence type="ECO:0000255" key="2"/>
<evidence type="ECO:0000269" key="3">
    <source>
    </source>
</evidence>
<evidence type="ECO:0000305" key="4"/>
<feature type="signal peptide" evidence="2">
    <location>
        <begin position="1"/>
        <end position="26"/>
    </location>
</feature>
<feature type="propeptide" id="PRO_0000013397" evidence="1">
    <location>
        <begin position="27"/>
        <end position="53"/>
    </location>
</feature>
<feature type="peptide" id="PRO_0000013398" description="Hepcidin-2">
    <location>
        <begin position="59"/>
        <end position="83"/>
    </location>
</feature>
<feature type="disulfide bond" evidence="1">
    <location>
        <begin position="65"/>
        <end position="81"/>
    </location>
</feature>
<feature type="disulfide bond" evidence="1">
    <location>
        <begin position="68"/>
        <end position="71"/>
    </location>
</feature>
<feature type="disulfide bond" evidence="1">
    <location>
        <begin position="69"/>
        <end position="77"/>
    </location>
</feature>
<feature type="disulfide bond" evidence="1">
    <location>
        <begin position="72"/>
        <end position="80"/>
    </location>
</feature>
<sequence>MALSTRTQAACLLLLLLASLSSTTYLQQQMRQTTELQPLHGEESRADIAIPMQKRRKRDINFPICRFCCQCCNKPSCGICCEE</sequence>
<gene>
    <name type="primary">Hamp2</name>
    <name type="synonym">Hepc2</name>
</gene>
<proteinExistence type="evidence at transcript level"/>
<protein>
    <recommendedName>
        <fullName>Hepcidin-2</fullName>
    </recommendedName>
</protein>
<name>HEPC2_MOUSE</name>
<comment type="function">
    <text evidence="1">Seems to act as a signaling molecule involved in the maintenance of iron homeostasis.</text>
</comment>
<comment type="subcellular location">
    <subcellularLocation>
        <location>Secreted</location>
    </subcellularLocation>
</comment>
<comment type="tissue specificity">
    <text evidence="3">Highly expressed in the liver and to a much lesser extent in the heart. Also expressed in pancreas.</text>
</comment>
<comment type="similarity">
    <text evidence="4">Belongs to the hepcidin family.</text>
</comment>
<comment type="sequence caution" evidence="4">
    <conflict type="erroneous initiation">
        <sequence resource="EMBL-CDS" id="BAC25194"/>
    </conflict>
</comment>
<comment type="sequence caution" evidence="4">
    <conflict type="erroneous initiation">
        <sequence resource="EMBL-CDS" id="BAC25234"/>
    </conflict>
</comment>
<reference key="1">
    <citation type="journal article" date="2003" name="FEBS Lett.">
        <title>Comparative analysis of mouse hepcidin 1 and 2 genes: evidence for different patterns of expression and co-inducibility during iron overload.</title>
        <authorList>
            <person name="Ilyin G."/>
            <person name="Courselaud B."/>
            <person name="Troadec M.-B."/>
            <person name="Pigeon C."/>
            <person name="Alizadeh M."/>
            <person name="Leroyer P."/>
            <person name="Brissot P."/>
            <person name="Loreal O."/>
        </authorList>
    </citation>
    <scope>NUCLEOTIDE SEQUENCE [MRNA]</scope>
    <scope>TISSUE SPECIFICITY</scope>
    <source>
        <strain>C57BL/6J</strain>
    </source>
</reference>
<reference key="2">
    <citation type="journal article" date="2005" name="Science">
        <title>The transcriptional landscape of the mammalian genome.</title>
        <authorList>
            <person name="Carninci P."/>
            <person name="Kasukawa T."/>
            <person name="Katayama S."/>
            <person name="Gough J."/>
            <person name="Frith M.C."/>
            <person name="Maeda N."/>
            <person name="Oyama R."/>
            <person name="Ravasi T."/>
            <person name="Lenhard B."/>
            <person name="Wells C."/>
            <person name="Kodzius R."/>
            <person name="Shimokawa K."/>
            <person name="Bajic V.B."/>
            <person name="Brenner S.E."/>
            <person name="Batalov S."/>
            <person name="Forrest A.R."/>
            <person name="Zavolan M."/>
            <person name="Davis M.J."/>
            <person name="Wilming L.G."/>
            <person name="Aidinis V."/>
            <person name="Allen J.E."/>
            <person name="Ambesi-Impiombato A."/>
            <person name="Apweiler R."/>
            <person name="Aturaliya R.N."/>
            <person name="Bailey T.L."/>
            <person name="Bansal M."/>
            <person name="Baxter L."/>
            <person name="Beisel K.W."/>
            <person name="Bersano T."/>
            <person name="Bono H."/>
            <person name="Chalk A.M."/>
            <person name="Chiu K.P."/>
            <person name="Choudhary V."/>
            <person name="Christoffels A."/>
            <person name="Clutterbuck D.R."/>
            <person name="Crowe M.L."/>
            <person name="Dalla E."/>
            <person name="Dalrymple B.P."/>
            <person name="de Bono B."/>
            <person name="Della Gatta G."/>
            <person name="di Bernardo D."/>
            <person name="Down T."/>
            <person name="Engstrom P."/>
            <person name="Fagiolini M."/>
            <person name="Faulkner G."/>
            <person name="Fletcher C.F."/>
            <person name="Fukushima T."/>
            <person name="Furuno M."/>
            <person name="Futaki S."/>
            <person name="Gariboldi M."/>
            <person name="Georgii-Hemming P."/>
            <person name="Gingeras T.R."/>
            <person name="Gojobori T."/>
            <person name="Green R.E."/>
            <person name="Gustincich S."/>
            <person name="Harbers M."/>
            <person name="Hayashi Y."/>
            <person name="Hensch T.K."/>
            <person name="Hirokawa N."/>
            <person name="Hill D."/>
            <person name="Huminiecki L."/>
            <person name="Iacono M."/>
            <person name="Ikeo K."/>
            <person name="Iwama A."/>
            <person name="Ishikawa T."/>
            <person name="Jakt M."/>
            <person name="Kanapin A."/>
            <person name="Katoh M."/>
            <person name="Kawasawa Y."/>
            <person name="Kelso J."/>
            <person name="Kitamura H."/>
            <person name="Kitano H."/>
            <person name="Kollias G."/>
            <person name="Krishnan S.P."/>
            <person name="Kruger A."/>
            <person name="Kummerfeld S.K."/>
            <person name="Kurochkin I.V."/>
            <person name="Lareau L.F."/>
            <person name="Lazarevic D."/>
            <person name="Lipovich L."/>
            <person name="Liu J."/>
            <person name="Liuni S."/>
            <person name="McWilliam S."/>
            <person name="Madan Babu M."/>
            <person name="Madera M."/>
            <person name="Marchionni L."/>
            <person name="Matsuda H."/>
            <person name="Matsuzawa S."/>
            <person name="Miki H."/>
            <person name="Mignone F."/>
            <person name="Miyake S."/>
            <person name="Morris K."/>
            <person name="Mottagui-Tabar S."/>
            <person name="Mulder N."/>
            <person name="Nakano N."/>
            <person name="Nakauchi H."/>
            <person name="Ng P."/>
            <person name="Nilsson R."/>
            <person name="Nishiguchi S."/>
            <person name="Nishikawa S."/>
            <person name="Nori F."/>
            <person name="Ohara O."/>
            <person name="Okazaki Y."/>
            <person name="Orlando V."/>
            <person name="Pang K.C."/>
            <person name="Pavan W.J."/>
            <person name="Pavesi G."/>
            <person name="Pesole G."/>
            <person name="Petrovsky N."/>
            <person name="Piazza S."/>
            <person name="Reed J."/>
            <person name="Reid J.F."/>
            <person name="Ring B.Z."/>
            <person name="Ringwald M."/>
            <person name="Rost B."/>
            <person name="Ruan Y."/>
            <person name="Salzberg S.L."/>
            <person name="Sandelin A."/>
            <person name="Schneider C."/>
            <person name="Schoenbach C."/>
            <person name="Sekiguchi K."/>
            <person name="Semple C.A."/>
            <person name="Seno S."/>
            <person name="Sessa L."/>
            <person name="Sheng Y."/>
            <person name="Shibata Y."/>
            <person name="Shimada H."/>
            <person name="Shimada K."/>
            <person name="Silva D."/>
            <person name="Sinclair B."/>
            <person name="Sperling S."/>
            <person name="Stupka E."/>
            <person name="Sugiura K."/>
            <person name="Sultana R."/>
            <person name="Takenaka Y."/>
            <person name="Taki K."/>
            <person name="Tammoja K."/>
            <person name="Tan S.L."/>
            <person name="Tang S."/>
            <person name="Taylor M.S."/>
            <person name="Tegner J."/>
            <person name="Teichmann S.A."/>
            <person name="Ueda H.R."/>
            <person name="van Nimwegen E."/>
            <person name="Verardo R."/>
            <person name="Wei C.L."/>
            <person name="Yagi K."/>
            <person name="Yamanishi H."/>
            <person name="Zabarovsky E."/>
            <person name="Zhu S."/>
            <person name="Zimmer A."/>
            <person name="Hide W."/>
            <person name="Bult C."/>
            <person name="Grimmond S.M."/>
            <person name="Teasdale R.D."/>
            <person name="Liu E.T."/>
            <person name="Brusic V."/>
            <person name="Quackenbush J."/>
            <person name="Wahlestedt C."/>
            <person name="Mattick J.S."/>
            <person name="Hume D.A."/>
            <person name="Kai C."/>
            <person name="Sasaki D."/>
            <person name="Tomaru Y."/>
            <person name="Fukuda S."/>
            <person name="Kanamori-Katayama M."/>
            <person name="Suzuki M."/>
            <person name="Aoki J."/>
            <person name="Arakawa T."/>
            <person name="Iida J."/>
            <person name="Imamura K."/>
            <person name="Itoh M."/>
            <person name="Kato T."/>
            <person name="Kawaji H."/>
            <person name="Kawagashira N."/>
            <person name="Kawashima T."/>
            <person name="Kojima M."/>
            <person name="Kondo S."/>
            <person name="Konno H."/>
            <person name="Nakano K."/>
            <person name="Ninomiya N."/>
            <person name="Nishio T."/>
            <person name="Okada M."/>
            <person name="Plessy C."/>
            <person name="Shibata K."/>
            <person name="Shiraki T."/>
            <person name="Suzuki S."/>
            <person name="Tagami M."/>
            <person name="Waki K."/>
            <person name="Watahiki A."/>
            <person name="Okamura-Oho Y."/>
            <person name="Suzuki H."/>
            <person name="Kawai J."/>
            <person name="Hayashizaki Y."/>
        </authorList>
    </citation>
    <scope>NUCLEOTIDE SEQUENCE [LARGE SCALE MRNA]</scope>
    <source>
        <strain>C57BL/6J</strain>
        <tissue>Pancreas</tissue>
        <tissue>Stomach</tissue>
    </source>
</reference>
<dbReference type="EMBL" id="AY232841">
    <property type="protein sequence ID" value="AAO73588.1"/>
    <property type="molecule type" value="mRNA"/>
</dbReference>
<dbReference type="EMBL" id="AK007975">
    <property type="protein sequence ID" value="BAC25194.1"/>
    <property type="status" value="ALT_INIT"/>
    <property type="molecule type" value="mRNA"/>
</dbReference>
<dbReference type="EMBL" id="AK008993">
    <property type="protein sequence ID" value="BAC25234.1"/>
    <property type="status" value="ALT_INIT"/>
    <property type="molecule type" value="mRNA"/>
</dbReference>
<dbReference type="CCDS" id="CCDS39894.2"/>
<dbReference type="RefSeq" id="NP_899080.2">
    <property type="nucleotide sequence ID" value="NM_183257.5"/>
</dbReference>
<dbReference type="SMR" id="Q80T19"/>
<dbReference type="BioGRID" id="211473">
    <property type="interactions" value="2"/>
</dbReference>
<dbReference type="FunCoup" id="Q80T19">
    <property type="interactions" value="115"/>
</dbReference>
<dbReference type="STRING" id="10090.ENSMUSP00000151677"/>
<dbReference type="PaxDb" id="10090-ENSMUSP00000074240"/>
<dbReference type="ProteomicsDB" id="269734"/>
<dbReference type="DNASU" id="66438"/>
<dbReference type="Ensembl" id="ENSMUST00000074671.9">
    <property type="protein sequence ID" value="ENSMUSP00000074240.8"/>
    <property type="gene ID" value="ENSMUSG00000056978.9"/>
</dbReference>
<dbReference type="GeneID" id="66438"/>
<dbReference type="KEGG" id="mmu:66438"/>
<dbReference type="AGR" id="MGI:2153530"/>
<dbReference type="CTD" id="66438"/>
<dbReference type="MGI" id="MGI:2153530">
    <property type="gene designation" value="Hamp2"/>
</dbReference>
<dbReference type="VEuPathDB" id="HostDB:ENSMUSG00000056978"/>
<dbReference type="eggNOG" id="ENOG502T0FU">
    <property type="taxonomic scope" value="Eukaryota"/>
</dbReference>
<dbReference type="GeneTree" id="ENSGT01030000240372"/>
<dbReference type="InParanoid" id="Q80T19"/>
<dbReference type="OMA" id="NCCRNAK"/>
<dbReference type="OrthoDB" id="90195at9989"/>
<dbReference type="PhylomeDB" id="Q80T19"/>
<dbReference type="BioGRID-ORCS" id="66438">
    <property type="hits" value="2 hits in 75 CRISPR screens"/>
</dbReference>
<dbReference type="PRO" id="PR:Q80T19"/>
<dbReference type="Proteomes" id="UP000000589">
    <property type="component" value="Chromosome 7"/>
</dbReference>
<dbReference type="RNAct" id="Q80T19">
    <property type="molecule type" value="protein"/>
</dbReference>
<dbReference type="Bgee" id="ENSMUSG00000056978">
    <property type="expression patterns" value="Expressed in epithelium of stomach and 53 other cell types or tissues"/>
</dbReference>
<dbReference type="ExpressionAtlas" id="Q80T19">
    <property type="expression patterns" value="baseline and differential"/>
</dbReference>
<dbReference type="GO" id="GO:0005576">
    <property type="term" value="C:extracellular region"/>
    <property type="evidence" value="ECO:0007669"/>
    <property type="project" value="UniProtKB-SubCell"/>
</dbReference>
<dbReference type="GO" id="GO:0005179">
    <property type="term" value="F:hormone activity"/>
    <property type="evidence" value="ECO:0007669"/>
    <property type="project" value="UniProtKB-KW"/>
</dbReference>
<dbReference type="GO" id="GO:0042742">
    <property type="term" value="P:defense response to bacterium"/>
    <property type="evidence" value="ECO:0007669"/>
    <property type="project" value="UniProtKB-KW"/>
</dbReference>
<dbReference type="GO" id="GO:0050832">
    <property type="term" value="P:defense response to fungus"/>
    <property type="evidence" value="ECO:0007669"/>
    <property type="project" value="UniProtKB-KW"/>
</dbReference>
<dbReference type="GO" id="GO:0006879">
    <property type="term" value="P:intracellular iron ion homeostasis"/>
    <property type="evidence" value="ECO:0007669"/>
    <property type="project" value="InterPro"/>
</dbReference>
<dbReference type="GO" id="GO:0031640">
    <property type="term" value="P:killing of cells of another organism"/>
    <property type="evidence" value="ECO:0007669"/>
    <property type="project" value="UniProtKB-KW"/>
</dbReference>
<dbReference type="InterPro" id="IPR010500">
    <property type="entry name" value="Hepcidin"/>
</dbReference>
<dbReference type="PANTHER" id="PTHR16877">
    <property type="entry name" value="HEPCIDIN"/>
    <property type="match status" value="1"/>
</dbReference>
<dbReference type="PANTHER" id="PTHR16877:SF0">
    <property type="entry name" value="HEPCIDIN"/>
    <property type="match status" value="1"/>
</dbReference>
<dbReference type="Pfam" id="PF06446">
    <property type="entry name" value="Hepcidin"/>
    <property type="match status" value="1"/>
</dbReference>
<accession>Q80T19</accession>
<accession>Q8BFW2</accession>